<keyword id="KW-0028">Amino-acid biosynthesis</keyword>
<keyword id="KW-0963">Cytoplasm</keyword>
<keyword id="KW-0521">NADP</keyword>
<keyword id="KW-0560">Oxidoreductase</keyword>
<keyword id="KW-0641">Proline biosynthesis</keyword>
<protein>
    <recommendedName>
        <fullName evidence="1">Gamma-glutamyl phosphate reductase</fullName>
        <shortName evidence="1">GPR</shortName>
        <ecNumber evidence="1">1.2.1.41</ecNumber>
    </recommendedName>
    <alternativeName>
        <fullName evidence="1">Glutamate-5-semialdehyde dehydrogenase</fullName>
    </alternativeName>
    <alternativeName>
        <fullName evidence="1">Glutamyl-gamma-semialdehyde dehydrogenase</fullName>
        <shortName evidence="1">GSA dehydrogenase</shortName>
    </alternativeName>
</protein>
<feature type="chain" id="PRO_1000193655" description="Gamma-glutamyl phosphate reductase">
    <location>
        <begin position="1"/>
        <end position="416"/>
    </location>
</feature>
<proteinExistence type="inferred from homology"/>
<sequence length="416" mass="45220">MMTIEQLGQRAKVASRALVSLTTKDKNQFLAFLAEELVAQTDMILAENAKDLAKAAEHGISEIMCDRLRLTADRIHAMAHGVRQVADLADPIGEVIKGYTNLDGLKITQKRVPLGVIAMIFESRPNVSIDAFSLAFKTNNAIILRGGKDALYSNMALVKLVRNALEASAITPDAVQLIEDTSHAVAEELMQATDYIDVLIPRGGARLIQTVKEKAKVPVIETGVGNVHIYVDEAADLEMAVKVVINAKTQRPSVCNAAESLIIHEKVGATFIPMLEAAISKVQQVEWRADEQAKALFSKAVLATEEDYAAEFLDYIMSVHLVSSLDEAISWINQYTSHHSEAIITANINAAERFQDLVDSAAVYVNASTRFTDGFVFGLGAEIGISTQKMHARGPMGLEALTSSKYLINGNGQIRS</sequence>
<gene>
    <name evidence="1" type="primary">proA</name>
    <name type="ordered locus">Sez_1590</name>
</gene>
<comment type="function">
    <text evidence="1">Catalyzes the NADPH-dependent reduction of L-glutamate 5-phosphate into L-glutamate 5-semialdehyde and phosphate. The product spontaneously undergoes cyclization to form 1-pyrroline-5-carboxylate.</text>
</comment>
<comment type="catalytic activity">
    <reaction evidence="1">
        <text>L-glutamate 5-semialdehyde + phosphate + NADP(+) = L-glutamyl 5-phosphate + NADPH + H(+)</text>
        <dbReference type="Rhea" id="RHEA:19541"/>
        <dbReference type="ChEBI" id="CHEBI:15378"/>
        <dbReference type="ChEBI" id="CHEBI:43474"/>
        <dbReference type="ChEBI" id="CHEBI:57783"/>
        <dbReference type="ChEBI" id="CHEBI:58066"/>
        <dbReference type="ChEBI" id="CHEBI:58274"/>
        <dbReference type="ChEBI" id="CHEBI:58349"/>
        <dbReference type="EC" id="1.2.1.41"/>
    </reaction>
</comment>
<comment type="pathway">
    <text evidence="1">Amino-acid biosynthesis; L-proline biosynthesis; L-glutamate 5-semialdehyde from L-glutamate: step 2/2.</text>
</comment>
<comment type="subcellular location">
    <subcellularLocation>
        <location evidence="1">Cytoplasm</location>
    </subcellularLocation>
</comment>
<comment type="similarity">
    <text evidence="1">Belongs to the gamma-glutamyl phosphate reductase family.</text>
</comment>
<dbReference type="EC" id="1.2.1.41" evidence="1"/>
<dbReference type="EMBL" id="CP001129">
    <property type="protein sequence ID" value="ACG62923.1"/>
    <property type="molecule type" value="Genomic_DNA"/>
</dbReference>
<dbReference type="SMR" id="B4U4K6"/>
<dbReference type="KEGG" id="sez:Sez_1590"/>
<dbReference type="HOGENOM" id="CLU_030231_0_0_9"/>
<dbReference type="UniPathway" id="UPA00098">
    <property type="reaction ID" value="UER00360"/>
</dbReference>
<dbReference type="Proteomes" id="UP000001873">
    <property type="component" value="Chromosome"/>
</dbReference>
<dbReference type="GO" id="GO:0005737">
    <property type="term" value="C:cytoplasm"/>
    <property type="evidence" value="ECO:0007669"/>
    <property type="project" value="UniProtKB-SubCell"/>
</dbReference>
<dbReference type="GO" id="GO:0004350">
    <property type="term" value="F:glutamate-5-semialdehyde dehydrogenase activity"/>
    <property type="evidence" value="ECO:0007669"/>
    <property type="project" value="UniProtKB-UniRule"/>
</dbReference>
<dbReference type="GO" id="GO:0050661">
    <property type="term" value="F:NADP binding"/>
    <property type="evidence" value="ECO:0007669"/>
    <property type="project" value="InterPro"/>
</dbReference>
<dbReference type="GO" id="GO:0055129">
    <property type="term" value="P:L-proline biosynthetic process"/>
    <property type="evidence" value="ECO:0007669"/>
    <property type="project" value="UniProtKB-UniRule"/>
</dbReference>
<dbReference type="CDD" id="cd07079">
    <property type="entry name" value="ALDH_F18-19_ProA-GPR"/>
    <property type="match status" value="1"/>
</dbReference>
<dbReference type="FunFam" id="3.40.309.10:FF:000006">
    <property type="entry name" value="Gamma-glutamyl phosphate reductase"/>
    <property type="match status" value="1"/>
</dbReference>
<dbReference type="Gene3D" id="3.40.605.10">
    <property type="entry name" value="Aldehyde Dehydrogenase, Chain A, domain 1"/>
    <property type="match status" value="1"/>
</dbReference>
<dbReference type="Gene3D" id="3.40.309.10">
    <property type="entry name" value="Aldehyde Dehydrogenase, Chain A, domain 2"/>
    <property type="match status" value="1"/>
</dbReference>
<dbReference type="HAMAP" id="MF_00412">
    <property type="entry name" value="ProA"/>
    <property type="match status" value="1"/>
</dbReference>
<dbReference type="InterPro" id="IPR016161">
    <property type="entry name" value="Ald_DH/histidinol_DH"/>
</dbReference>
<dbReference type="InterPro" id="IPR016163">
    <property type="entry name" value="Ald_DH_C"/>
</dbReference>
<dbReference type="InterPro" id="IPR016162">
    <property type="entry name" value="Ald_DH_N"/>
</dbReference>
<dbReference type="InterPro" id="IPR015590">
    <property type="entry name" value="Aldehyde_DH_dom"/>
</dbReference>
<dbReference type="InterPro" id="IPR020593">
    <property type="entry name" value="G-glutamylP_reductase_CS"/>
</dbReference>
<dbReference type="InterPro" id="IPR012134">
    <property type="entry name" value="Glu-5-SA_DH"/>
</dbReference>
<dbReference type="InterPro" id="IPR000965">
    <property type="entry name" value="GPR_dom"/>
</dbReference>
<dbReference type="NCBIfam" id="NF001221">
    <property type="entry name" value="PRK00197.1"/>
    <property type="match status" value="1"/>
</dbReference>
<dbReference type="NCBIfam" id="TIGR00407">
    <property type="entry name" value="proA"/>
    <property type="match status" value="1"/>
</dbReference>
<dbReference type="PANTHER" id="PTHR11063:SF8">
    <property type="entry name" value="DELTA-1-PYRROLINE-5-CARBOXYLATE SYNTHASE"/>
    <property type="match status" value="1"/>
</dbReference>
<dbReference type="PANTHER" id="PTHR11063">
    <property type="entry name" value="GLUTAMATE SEMIALDEHYDE DEHYDROGENASE"/>
    <property type="match status" value="1"/>
</dbReference>
<dbReference type="Pfam" id="PF00171">
    <property type="entry name" value="Aldedh"/>
    <property type="match status" value="1"/>
</dbReference>
<dbReference type="PIRSF" id="PIRSF000151">
    <property type="entry name" value="GPR"/>
    <property type="match status" value="1"/>
</dbReference>
<dbReference type="SUPFAM" id="SSF53720">
    <property type="entry name" value="ALDH-like"/>
    <property type="match status" value="1"/>
</dbReference>
<dbReference type="PROSITE" id="PS01223">
    <property type="entry name" value="PROA"/>
    <property type="match status" value="1"/>
</dbReference>
<name>PROA_STREM</name>
<evidence type="ECO:0000255" key="1">
    <source>
        <dbReference type="HAMAP-Rule" id="MF_00412"/>
    </source>
</evidence>
<organism>
    <name type="scientific">Streptococcus equi subsp. zooepidemicus (strain MGCS10565)</name>
    <dbReference type="NCBI Taxonomy" id="552526"/>
    <lineage>
        <taxon>Bacteria</taxon>
        <taxon>Bacillati</taxon>
        <taxon>Bacillota</taxon>
        <taxon>Bacilli</taxon>
        <taxon>Lactobacillales</taxon>
        <taxon>Streptococcaceae</taxon>
        <taxon>Streptococcus</taxon>
    </lineage>
</organism>
<reference key="1">
    <citation type="journal article" date="2008" name="PLoS ONE">
        <title>Genome sequence of a lancefield group C Streptococcus zooepidemicus strain causing epidemic nephritis: new information about an old disease.</title>
        <authorList>
            <person name="Beres S.B."/>
            <person name="Sesso R."/>
            <person name="Pinto S.W.L."/>
            <person name="Hoe N.P."/>
            <person name="Porcella S.F."/>
            <person name="Deleo F.R."/>
            <person name="Musser J.M."/>
        </authorList>
    </citation>
    <scope>NUCLEOTIDE SEQUENCE [LARGE SCALE GENOMIC DNA]</scope>
    <source>
        <strain>MGCS10565</strain>
    </source>
</reference>
<accession>B4U4K6</accession>